<protein>
    <recommendedName>
        <fullName evidence="1">NH(3)-dependent NAD(+) synthetase</fullName>
        <ecNumber evidence="1">6.3.1.5</ecNumber>
    </recommendedName>
</protein>
<dbReference type="EC" id="6.3.1.5" evidence="1"/>
<dbReference type="EMBL" id="CP001022">
    <property type="protein sequence ID" value="ACB61475.1"/>
    <property type="molecule type" value="Genomic_DNA"/>
</dbReference>
<dbReference type="RefSeq" id="WP_012370893.1">
    <property type="nucleotide sequence ID" value="NC_010556.1"/>
</dbReference>
<dbReference type="SMR" id="B1YJ94"/>
<dbReference type="STRING" id="262543.Exig_2023"/>
<dbReference type="KEGG" id="esi:Exig_2023"/>
<dbReference type="eggNOG" id="COG0171">
    <property type="taxonomic scope" value="Bacteria"/>
</dbReference>
<dbReference type="HOGENOM" id="CLU_059327_3_0_9"/>
<dbReference type="OrthoDB" id="9803818at2"/>
<dbReference type="UniPathway" id="UPA00253">
    <property type="reaction ID" value="UER00333"/>
</dbReference>
<dbReference type="Proteomes" id="UP000001681">
    <property type="component" value="Chromosome"/>
</dbReference>
<dbReference type="GO" id="GO:0005737">
    <property type="term" value="C:cytoplasm"/>
    <property type="evidence" value="ECO:0007669"/>
    <property type="project" value="InterPro"/>
</dbReference>
<dbReference type="GO" id="GO:0005524">
    <property type="term" value="F:ATP binding"/>
    <property type="evidence" value="ECO:0007669"/>
    <property type="project" value="UniProtKB-UniRule"/>
</dbReference>
<dbReference type="GO" id="GO:0004359">
    <property type="term" value="F:glutaminase activity"/>
    <property type="evidence" value="ECO:0007669"/>
    <property type="project" value="InterPro"/>
</dbReference>
<dbReference type="GO" id="GO:0046872">
    <property type="term" value="F:metal ion binding"/>
    <property type="evidence" value="ECO:0007669"/>
    <property type="project" value="UniProtKB-KW"/>
</dbReference>
<dbReference type="GO" id="GO:0003952">
    <property type="term" value="F:NAD+ synthase (glutamine-hydrolyzing) activity"/>
    <property type="evidence" value="ECO:0007669"/>
    <property type="project" value="InterPro"/>
</dbReference>
<dbReference type="GO" id="GO:0008795">
    <property type="term" value="F:NAD+ synthase activity"/>
    <property type="evidence" value="ECO:0007669"/>
    <property type="project" value="UniProtKB-UniRule"/>
</dbReference>
<dbReference type="GO" id="GO:0009435">
    <property type="term" value="P:NAD biosynthetic process"/>
    <property type="evidence" value="ECO:0007669"/>
    <property type="project" value="UniProtKB-UniRule"/>
</dbReference>
<dbReference type="CDD" id="cd00553">
    <property type="entry name" value="NAD_synthase"/>
    <property type="match status" value="1"/>
</dbReference>
<dbReference type="FunFam" id="3.40.50.620:FF:000015">
    <property type="entry name" value="NH(3)-dependent NAD(+) synthetase"/>
    <property type="match status" value="1"/>
</dbReference>
<dbReference type="Gene3D" id="3.40.50.620">
    <property type="entry name" value="HUPs"/>
    <property type="match status" value="1"/>
</dbReference>
<dbReference type="HAMAP" id="MF_00193">
    <property type="entry name" value="NadE_ammonia_dep"/>
    <property type="match status" value="1"/>
</dbReference>
<dbReference type="InterPro" id="IPR022310">
    <property type="entry name" value="NAD/GMP_synthase"/>
</dbReference>
<dbReference type="InterPro" id="IPR003694">
    <property type="entry name" value="NAD_synthase"/>
</dbReference>
<dbReference type="InterPro" id="IPR022926">
    <property type="entry name" value="NH(3)-dep_NAD(+)_synth"/>
</dbReference>
<dbReference type="InterPro" id="IPR014729">
    <property type="entry name" value="Rossmann-like_a/b/a_fold"/>
</dbReference>
<dbReference type="NCBIfam" id="TIGR00552">
    <property type="entry name" value="nadE"/>
    <property type="match status" value="1"/>
</dbReference>
<dbReference type="NCBIfam" id="NF001979">
    <property type="entry name" value="PRK00768.1"/>
    <property type="match status" value="1"/>
</dbReference>
<dbReference type="PANTHER" id="PTHR23090">
    <property type="entry name" value="NH 3 /GLUTAMINE-DEPENDENT NAD + SYNTHETASE"/>
    <property type="match status" value="1"/>
</dbReference>
<dbReference type="PANTHER" id="PTHR23090:SF7">
    <property type="entry name" value="NH(3)-DEPENDENT NAD(+) SYNTHETASE"/>
    <property type="match status" value="1"/>
</dbReference>
<dbReference type="Pfam" id="PF02540">
    <property type="entry name" value="NAD_synthase"/>
    <property type="match status" value="1"/>
</dbReference>
<dbReference type="SUPFAM" id="SSF52402">
    <property type="entry name" value="Adenine nucleotide alpha hydrolases-like"/>
    <property type="match status" value="1"/>
</dbReference>
<gene>
    <name evidence="1" type="primary">nadE</name>
    <name type="ordered locus">Exig_2023</name>
</gene>
<keyword id="KW-0067">ATP-binding</keyword>
<keyword id="KW-0436">Ligase</keyword>
<keyword id="KW-0460">Magnesium</keyword>
<keyword id="KW-0479">Metal-binding</keyword>
<keyword id="KW-0520">NAD</keyword>
<keyword id="KW-0547">Nucleotide-binding</keyword>
<keyword id="KW-1185">Reference proteome</keyword>
<organism>
    <name type="scientific">Exiguobacterium sibiricum (strain DSM 17290 / CCUG 55495 / CIP 109462 / JCM 13490 / 255-15)</name>
    <dbReference type="NCBI Taxonomy" id="262543"/>
    <lineage>
        <taxon>Bacteria</taxon>
        <taxon>Bacillati</taxon>
        <taxon>Bacillota</taxon>
        <taxon>Bacilli</taxon>
        <taxon>Bacillales</taxon>
        <taxon>Bacillales Family XII. Incertae Sedis</taxon>
        <taxon>Exiguobacterium</taxon>
    </lineage>
</organism>
<feature type="chain" id="PRO_1000118623" description="NH(3)-dependent NAD(+) synthetase">
    <location>
        <begin position="1"/>
        <end position="271"/>
    </location>
</feature>
<feature type="binding site" evidence="1">
    <location>
        <begin position="43"/>
        <end position="50"/>
    </location>
    <ligand>
        <name>ATP</name>
        <dbReference type="ChEBI" id="CHEBI:30616"/>
    </ligand>
</feature>
<feature type="binding site" evidence="1">
    <location>
        <position position="49"/>
    </location>
    <ligand>
        <name>Mg(2+)</name>
        <dbReference type="ChEBI" id="CHEBI:18420"/>
    </ligand>
</feature>
<feature type="binding site" evidence="1">
    <location>
        <position position="137"/>
    </location>
    <ligand>
        <name>deamido-NAD(+)</name>
        <dbReference type="ChEBI" id="CHEBI:58437"/>
    </ligand>
</feature>
<feature type="binding site" evidence="1">
    <location>
        <position position="157"/>
    </location>
    <ligand>
        <name>ATP</name>
        <dbReference type="ChEBI" id="CHEBI:30616"/>
    </ligand>
</feature>
<feature type="binding site" evidence="1">
    <location>
        <position position="162"/>
    </location>
    <ligand>
        <name>Mg(2+)</name>
        <dbReference type="ChEBI" id="CHEBI:18420"/>
    </ligand>
</feature>
<feature type="binding site" evidence="1">
    <location>
        <position position="170"/>
    </location>
    <ligand>
        <name>deamido-NAD(+)</name>
        <dbReference type="ChEBI" id="CHEBI:58437"/>
    </ligand>
</feature>
<feature type="binding site" evidence="1">
    <location>
        <position position="177"/>
    </location>
    <ligand>
        <name>deamido-NAD(+)</name>
        <dbReference type="ChEBI" id="CHEBI:58437"/>
    </ligand>
</feature>
<feature type="binding site" evidence="1">
    <location>
        <position position="186"/>
    </location>
    <ligand>
        <name>ATP</name>
        <dbReference type="ChEBI" id="CHEBI:30616"/>
    </ligand>
</feature>
<feature type="binding site" evidence="1">
    <location>
        <position position="208"/>
    </location>
    <ligand>
        <name>ATP</name>
        <dbReference type="ChEBI" id="CHEBI:30616"/>
    </ligand>
</feature>
<feature type="binding site" evidence="1">
    <location>
        <begin position="257"/>
        <end position="258"/>
    </location>
    <ligand>
        <name>deamido-NAD(+)</name>
        <dbReference type="ChEBI" id="CHEBI:58437"/>
    </ligand>
</feature>
<evidence type="ECO:0000255" key="1">
    <source>
        <dbReference type="HAMAP-Rule" id="MF_00193"/>
    </source>
</evidence>
<accession>B1YJ94</accession>
<name>NADE_EXIS2</name>
<proteinExistence type="inferred from homology"/>
<sequence>MQQEIIQVTGVKPVIDAEEEIKQRVQFLKEYLVHTGAKGLVLGISGGQDSSLAGRLCQIAVEELRSETNRDYQFYAVRLPYGQQQDESDAQLALSFIRPDHALRVDIKPAVAASMASFEQATGDVLSDFSKGNTKARERMKVQYDIAAHYGCLVVGTDHAAEFVTGFYTKHGDGACDLTPLTGLNKRQGKQLLRQLQAPEGLIEKVPTADLEDNQPGLPDEQALGMTYNEIDDYLEGKTISAESQAKLEAQYKRVGHKHHMPVSPLDTWWK</sequence>
<reference key="1">
    <citation type="submission" date="2008-04" db="EMBL/GenBank/DDBJ databases">
        <title>Complete sequence of chromosome of Exiguobacterium sibiricum 255-15.</title>
        <authorList>
            <consortium name="US DOE Joint Genome Institute"/>
            <person name="Copeland A."/>
            <person name="Lucas S."/>
            <person name="Lapidus A."/>
            <person name="Glavina del Rio T."/>
            <person name="Dalin E."/>
            <person name="Tice H."/>
            <person name="Bruce D."/>
            <person name="Goodwin L."/>
            <person name="Pitluck S."/>
            <person name="Kiss H."/>
            <person name="Chertkov O."/>
            <person name="Monk C."/>
            <person name="Brettin T."/>
            <person name="Detter J.C."/>
            <person name="Han C."/>
            <person name="Kuske C.R."/>
            <person name="Schmutz J."/>
            <person name="Larimer F."/>
            <person name="Land M."/>
            <person name="Hauser L."/>
            <person name="Kyrpides N."/>
            <person name="Mikhailova N."/>
            <person name="Vishnivetskaya T."/>
            <person name="Rodrigues D.F."/>
            <person name="Gilichinsky D."/>
            <person name="Tiedje J."/>
            <person name="Richardson P."/>
        </authorList>
    </citation>
    <scope>NUCLEOTIDE SEQUENCE [LARGE SCALE GENOMIC DNA]</scope>
    <source>
        <strain>DSM 17290 / CCUG 55495 / CIP 109462 / JCM 13490 / 255-15</strain>
    </source>
</reference>
<comment type="function">
    <text evidence="1">Catalyzes the ATP-dependent amidation of deamido-NAD to form NAD. Uses ammonia as a nitrogen source.</text>
</comment>
<comment type="catalytic activity">
    <reaction evidence="1">
        <text>deamido-NAD(+) + NH4(+) + ATP = AMP + diphosphate + NAD(+) + H(+)</text>
        <dbReference type="Rhea" id="RHEA:21188"/>
        <dbReference type="ChEBI" id="CHEBI:15378"/>
        <dbReference type="ChEBI" id="CHEBI:28938"/>
        <dbReference type="ChEBI" id="CHEBI:30616"/>
        <dbReference type="ChEBI" id="CHEBI:33019"/>
        <dbReference type="ChEBI" id="CHEBI:57540"/>
        <dbReference type="ChEBI" id="CHEBI:58437"/>
        <dbReference type="ChEBI" id="CHEBI:456215"/>
        <dbReference type="EC" id="6.3.1.5"/>
    </reaction>
</comment>
<comment type="pathway">
    <text evidence="1">Cofactor biosynthesis; NAD(+) biosynthesis; NAD(+) from deamido-NAD(+) (ammonia route): step 1/1.</text>
</comment>
<comment type="subunit">
    <text evidence="1">Homodimer.</text>
</comment>
<comment type="similarity">
    <text evidence="1">Belongs to the NAD synthetase family.</text>
</comment>